<feature type="chain" id="PRO_0000085902" description="Casein kinase II subunit alpha">
    <location>
        <begin position="1"/>
        <end position="336"/>
    </location>
</feature>
<feature type="domain" description="Protein kinase" evidence="3">
    <location>
        <begin position="32"/>
        <end position="317"/>
    </location>
</feature>
<feature type="active site" description="Proton acceptor" evidence="3 4">
    <location>
        <position position="149"/>
    </location>
</feature>
<feature type="binding site" evidence="3">
    <location>
        <begin position="38"/>
        <end position="46"/>
    </location>
    <ligand>
        <name>ATP</name>
        <dbReference type="ChEBI" id="CHEBI:30616"/>
    </ligand>
</feature>
<feature type="binding site" evidence="3">
    <location>
        <position position="61"/>
    </location>
    <ligand>
        <name>ATP</name>
        <dbReference type="ChEBI" id="CHEBI:30616"/>
    </ligand>
</feature>
<gene>
    <name type="primary">cka</name>
    <name type="synonym">ck-1b</name>
    <name type="ORF">5C2.270</name>
    <name type="ORF">NCU03124</name>
</gene>
<keyword id="KW-0067">ATP-binding</keyword>
<keyword id="KW-0418">Kinase</keyword>
<keyword id="KW-0547">Nucleotide-binding</keyword>
<keyword id="KW-1185">Reference proteome</keyword>
<keyword id="KW-0723">Serine/threonine-protein kinase</keyword>
<keyword id="KW-0808">Transferase</keyword>
<organism>
    <name type="scientific">Neurospora crassa (strain ATCC 24698 / 74-OR23-1A / CBS 708.71 / DSM 1257 / FGSC 987)</name>
    <dbReference type="NCBI Taxonomy" id="367110"/>
    <lineage>
        <taxon>Eukaryota</taxon>
        <taxon>Fungi</taxon>
        <taxon>Dikarya</taxon>
        <taxon>Ascomycota</taxon>
        <taxon>Pezizomycotina</taxon>
        <taxon>Sordariomycetes</taxon>
        <taxon>Sordariomycetidae</taxon>
        <taxon>Sordariales</taxon>
        <taxon>Sordariaceae</taxon>
        <taxon>Neurospora</taxon>
    </lineage>
</organism>
<sequence>MARVYADVNQNMPRAYWDYDSVNISWGVLENYEVVRKIGRGKYSEVFEGINVVNYQKCVIKVLKPVKKKKIKREIKILQNLAGGPNIVALLDVVRDSQSKTPSLIFEYVNNTEFRTLYPRFNDFDVRYYIFELLKALDFCHSKGIMHRDVKPHNVMIDHENRKLRLIDWGLAEFYHPGTEYNVRVASRYFKGPELLVDFQEYDYSLDMWSLGAMFASMIFRKEPFFHGQSNSDQLVKIAKVLGTDELFDYLDKYEIELDAQYDDILGRFQRKPWHSFINAENQRFVSNEAIDFLDKLLRYDHNERLTAKEAMAHPYFAPVRDEATRARYLAGETIN</sequence>
<name>CSK2A_NEUCR</name>
<protein>
    <recommendedName>
        <fullName>Casein kinase II subunit alpha</fullName>
        <shortName>CK II subunit alpha</shortName>
        <ecNumber evidence="2">2.7.11.1</ecNumber>
    </recommendedName>
</protein>
<evidence type="ECO:0000250" key="1">
    <source>
        <dbReference type="UniProtKB" id="P15790"/>
    </source>
</evidence>
<evidence type="ECO:0000250" key="2">
    <source>
        <dbReference type="UniProtKB" id="P68400"/>
    </source>
</evidence>
<evidence type="ECO:0000255" key="3">
    <source>
        <dbReference type="PROSITE-ProRule" id="PRU00159"/>
    </source>
</evidence>
<evidence type="ECO:0000255" key="4">
    <source>
        <dbReference type="PROSITE-ProRule" id="PRU10027"/>
    </source>
</evidence>
<evidence type="ECO:0000269" key="5">
    <source>
    </source>
</evidence>
<evidence type="ECO:0000305" key="6"/>
<reference key="1">
    <citation type="journal article" date="2002" name="Genes Dev.">
        <title>Regulation of the Neurospora circadian clock by casein kinase II.</title>
        <authorList>
            <person name="Yang Y."/>
            <person name="Cheng P."/>
            <person name="Liu Y."/>
        </authorList>
    </citation>
    <scope>NUCLEOTIDE SEQUENCE [MRNA]</scope>
</reference>
<reference key="2">
    <citation type="journal article" date="2003" name="Nucleic Acids Res.">
        <title>What's in the genome of a filamentous fungus? Analysis of the Neurospora genome sequence.</title>
        <authorList>
            <person name="Mannhaupt G."/>
            <person name="Montrone C."/>
            <person name="Haase D."/>
            <person name="Mewes H.-W."/>
            <person name="Aign V."/>
            <person name="Hoheisel J.D."/>
            <person name="Fartmann B."/>
            <person name="Nyakatura G."/>
            <person name="Kempken F."/>
            <person name="Maier J."/>
            <person name="Schulte U."/>
        </authorList>
    </citation>
    <scope>NUCLEOTIDE SEQUENCE [LARGE SCALE GENOMIC DNA]</scope>
    <source>
        <strain>ATCC 24698 / 74-OR23-1A / CBS 708.71 / DSM 1257 / FGSC 987</strain>
    </source>
</reference>
<reference key="3">
    <citation type="journal article" date="2003" name="Nature">
        <title>The genome sequence of the filamentous fungus Neurospora crassa.</title>
        <authorList>
            <person name="Galagan J.E."/>
            <person name="Calvo S.E."/>
            <person name="Borkovich K.A."/>
            <person name="Selker E.U."/>
            <person name="Read N.D."/>
            <person name="Jaffe D.B."/>
            <person name="FitzHugh W."/>
            <person name="Ma L.-J."/>
            <person name="Smirnov S."/>
            <person name="Purcell S."/>
            <person name="Rehman B."/>
            <person name="Elkins T."/>
            <person name="Engels R."/>
            <person name="Wang S."/>
            <person name="Nielsen C.B."/>
            <person name="Butler J."/>
            <person name="Endrizzi M."/>
            <person name="Qui D."/>
            <person name="Ianakiev P."/>
            <person name="Bell-Pedersen D."/>
            <person name="Nelson M.A."/>
            <person name="Werner-Washburne M."/>
            <person name="Selitrennikoff C.P."/>
            <person name="Kinsey J.A."/>
            <person name="Braun E.L."/>
            <person name="Zelter A."/>
            <person name="Schulte U."/>
            <person name="Kothe G.O."/>
            <person name="Jedd G."/>
            <person name="Mewes H.-W."/>
            <person name="Staben C."/>
            <person name="Marcotte E."/>
            <person name="Greenberg D."/>
            <person name="Roy A."/>
            <person name="Foley K."/>
            <person name="Naylor J."/>
            <person name="Stange-Thomann N."/>
            <person name="Barrett R."/>
            <person name="Gnerre S."/>
            <person name="Kamal M."/>
            <person name="Kamvysselis M."/>
            <person name="Mauceli E.W."/>
            <person name="Bielke C."/>
            <person name="Rudd S."/>
            <person name="Frishman D."/>
            <person name="Krystofova S."/>
            <person name="Rasmussen C."/>
            <person name="Metzenberg R.L."/>
            <person name="Perkins D.D."/>
            <person name="Kroken S."/>
            <person name="Cogoni C."/>
            <person name="Macino G."/>
            <person name="Catcheside D.E.A."/>
            <person name="Li W."/>
            <person name="Pratt R.J."/>
            <person name="Osmani S.A."/>
            <person name="DeSouza C.P.C."/>
            <person name="Glass N.L."/>
            <person name="Orbach M.J."/>
            <person name="Berglund J.A."/>
            <person name="Voelker R."/>
            <person name="Yarden O."/>
            <person name="Plamann M."/>
            <person name="Seiler S."/>
            <person name="Dunlap J.C."/>
            <person name="Radford A."/>
            <person name="Aramayo R."/>
            <person name="Natvig D.O."/>
            <person name="Alex L.A."/>
            <person name="Mannhaupt G."/>
            <person name="Ebbole D.J."/>
            <person name="Freitag M."/>
            <person name="Paulsen I."/>
            <person name="Sachs M.S."/>
            <person name="Lander E.S."/>
            <person name="Nusbaum C."/>
            <person name="Birren B.W."/>
        </authorList>
    </citation>
    <scope>NUCLEOTIDE SEQUENCE [LARGE SCALE GENOMIC DNA]</scope>
    <source>
        <strain>ATCC 24698 / 74-OR23-1A / CBS 708.71 / DSM 1257 / FGSC 987</strain>
    </source>
</reference>
<proteinExistence type="evidence at transcript level"/>
<dbReference type="EC" id="2.7.11.1" evidence="2"/>
<dbReference type="EMBL" id="AF494376">
    <property type="protein sequence ID" value="AAM14624.1"/>
    <property type="molecule type" value="mRNA"/>
</dbReference>
<dbReference type="EMBL" id="BX842637">
    <property type="protein sequence ID" value="CAE76570.1"/>
    <property type="status" value="ALT_SEQ"/>
    <property type="molecule type" value="Genomic_DNA"/>
</dbReference>
<dbReference type="EMBL" id="CM002236">
    <property type="protein sequence ID" value="EAA35747.3"/>
    <property type="molecule type" value="Genomic_DNA"/>
</dbReference>
<dbReference type="RefSeq" id="XP_964983.3">
    <property type="nucleotide sequence ID" value="XM_959890.3"/>
</dbReference>
<dbReference type="SMR" id="Q8TG13"/>
<dbReference type="FunCoup" id="Q8TG13">
    <property type="interactions" value="658"/>
</dbReference>
<dbReference type="STRING" id="367110.Q8TG13"/>
<dbReference type="PaxDb" id="5141-EFNCRP00000002937"/>
<dbReference type="EnsemblFungi" id="EAA35747">
    <property type="protein sequence ID" value="EAA35747"/>
    <property type="gene ID" value="NCU03124"/>
</dbReference>
<dbReference type="GeneID" id="3881116"/>
<dbReference type="KEGG" id="ncr:NCU03124"/>
<dbReference type="VEuPathDB" id="FungiDB:NCU03124"/>
<dbReference type="HOGENOM" id="CLU_000288_70_4_1"/>
<dbReference type="InParanoid" id="Q8TG13"/>
<dbReference type="OrthoDB" id="10254671at2759"/>
<dbReference type="Proteomes" id="UP000001805">
    <property type="component" value="Chromosome 1, Linkage Group I"/>
</dbReference>
<dbReference type="GO" id="GO:0005829">
    <property type="term" value="C:cytosol"/>
    <property type="evidence" value="ECO:0000318"/>
    <property type="project" value="GO_Central"/>
</dbReference>
<dbReference type="GO" id="GO:0005634">
    <property type="term" value="C:nucleus"/>
    <property type="evidence" value="ECO:0000318"/>
    <property type="project" value="GO_Central"/>
</dbReference>
<dbReference type="GO" id="GO:0005956">
    <property type="term" value="C:protein kinase CK2 complex"/>
    <property type="evidence" value="ECO:0000318"/>
    <property type="project" value="GO_Central"/>
</dbReference>
<dbReference type="GO" id="GO:0005524">
    <property type="term" value="F:ATP binding"/>
    <property type="evidence" value="ECO:0007669"/>
    <property type="project" value="UniProtKB-KW"/>
</dbReference>
<dbReference type="GO" id="GO:0106310">
    <property type="term" value="F:protein serine kinase activity"/>
    <property type="evidence" value="ECO:0007669"/>
    <property type="project" value="RHEA"/>
</dbReference>
<dbReference type="GO" id="GO:0004674">
    <property type="term" value="F:protein serine/threonine kinase activity"/>
    <property type="evidence" value="ECO:0000318"/>
    <property type="project" value="GO_Central"/>
</dbReference>
<dbReference type="GO" id="GO:0006974">
    <property type="term" value="P:DNA damage response"/>
    <property type="evidence" value="ECO:0000318"/>
    <property type="project" value="GO_Central"/>
</dbReference>
<dbReference type="GO" id="GO:0051726">
    <property type="term" value="P:regulation of cell cycle"/>
    <property type="evidence" value="ECO:0000318"/>
    <property type="project" value="GO_Central"/>
</dbReference>
<dbReference type="CDD" id="cd14132">
    <property type="entry name" value="STKc_CK2_alpha"/>
    <property type="match status" value="1"/>
</dbReference>
<dbReference type="FunFam" id="1.10.510.10:FF:000059">
    <property type="entry name" value="Casein kinase II subunit alpha"/>
    <property type="match status" value="1"/>
</dbReference>
<dbReference type="FunFam" id="3.30.200.20:FF:000088">
    <property type="entry name" value="Casein kinase II subunit alpha"/>
    <property type="match status" value="1"/>
</dbReference>
<dbReference type="Gene3D" id="3.30.200.20">
    <property type="entry name" value="Phosphorylase Kinase, domain 1"/>
    <property type="match status" value="1"/>
</dbReference>
<dbReference type="Gene3D" id="1.10.510.10">
    <property type="entry name" value="Transferase(Phosphotransferase) domain 1"/>
    <property type="match status" value="1"/>
</dbReference>
<dbReference type="InterPro" id="IPR045216">
    <property type="entry name" value="CK2_alpha"/>
</dbReference>
<dbReference type="InterPro" id="IPR011009">
    <property type="entry name" value="Kinase-like_dom_sf"/>
</dbReference>
<dbReference type="InterPro" id="IPR000719">
    <property type="entry name" value="Prot_kinase_dom"/>
</dbReference>
<dbReference type="InterPro" id="IPR017441">
    <property type="entry name" value="Protein_kinase_ATP_BS"/>
</dbReference>
<dbReference type="InterPro" id="IPR008271">
    <property type="entry name" value="Ser/Thr_kinase_AS"/>
</dbReference>
<dbReference type="PANTHER" id="PTHR24054">
    <property type="entry name" value="CASEIN KINASE II SUBUNIT ALPHA"/>
    <property type="match status" value="1"/>
</dbReference>
<dbReference type="PANTHER" id="PTHR24054:SF0">
    <property type="entry name" value="CASEIN KINASE II SUBUNIT ALPHA"/>
    <property type="match status" value="1"/>
</dbReference>
<dbReference type="Pfam" id="PF00069">
    <property type="entry name" value="Pkinase"/>
    <property type="match status" value="1"/>
</dbReference>
<dbReference type="SMART" id="SM00220">
    <property type="entry name" value="S_TKc"/>
    <property type="match status" value="1"/>
</dbReference>
<dbReference type="SUPFAM" id="SSF56112">
    <property type="entry name" value="Protein kinase-like (PK-like)"/>
    <property type="match status" value="1"/>
</dbReference>
<dbReference type="PROSITE" id="PS00107">
    <property type="entry name" value="PROTEIN_KINASE_ATP"/>
    <property type="match status" value="1"/>
</dbReference>
<dbReference type="PROSITE" id="PS50011">
    <property type="entry name" value="PROTEIN_KINASE_DOM"/>
    <property type="match status" value="1"/>
</dbReference>
<dbReference type="PROSITE" id="PS00108">
    <property type="entry name" value="PROTEIN_KINASE_ST"/>
    <property type="match status" value="1"/>
</dbReference>
<comment type="function">
    <text evidence="2 5">Catalytic subunit of a constitutively active serine/threonine-protein kinase complex that phosphorylates a large number of substrates containing acidic residues C-terminal to the phosphorylated serine or threonine (By similarity). Phosphorylates the frq clock protein thus regulating the circadian clock (PubMed:11959847).</text>
</comment>
<comment type="catalytic activity">
    <reaction evidence="2">
        <text>L-seryl-[protein] + ATP = O-phospho-L-seryl-[protein] + ADP + H(+)</text>
        <dbReference type="Rhea" id="RHEA:17989"/>
        <dbReference type="Rhea" id="RHEA-COMP:9863"/>
        <dbReference type="Rhea" id="RHEA-COMP:11604"/>
        <dbReference type="ChEBI" id="CHEBI:15378"/>
        <dbReference type="ChEBI" id="CHEBI:29999"/>
        <dbReference type="ChEBI" id="CHEBI:30616"/>
        <dbReference type="ChEBI" id="CHEBI:83421"/>
        <dbReference type="ChEBI" id="CHEBI:456216"/>
        <dbReference type="EC" id="2.7.11.1"/>
    </reaction>
</comment>
<comment type="catalytic activity">
    <reaction evidence="2">
        <text>L-threonyl-[protein] + ATP = O-phospho-L-threonyl-[protein] + ADP + H(+)</text>
        <dbReference type="Rhea" id="RHEA:46608"/>
        <dbReference type="Rhea" id="RHEA-COMP:11060"/>
        <dbReference type="Rhea" id="RHEA-COMP:11605"/>
        <dbReference type="ChEBI" id="CHEBI:15378"/>
        <dbReference type="ChEBI" id="CHEBI:30013"/>
        <dbReference type="ChEBI" id="CHEBI:30616"/>
        <dbReference type="ChEBI" id="CHEBI:61977"/>
        <dbReference type="ChEBI" id="CHEBI:456216"/>
        <dbReference type="EC" id="2.7.11.1"/>
    </reaction>
</comment>
<comment type="subunit">
    <text evidence="1">Tetramer composed of two alpha chains, one beta chain and one beta' chain.</text>
</comment>
<comment type="similarity">
    <text evidence="3">Belongs to the protein kinase superfamily. Ser/Thr protein kinase family. CK2 subfamily.</text>
</comment>
<comment type="sequence caution" evidence="6">
    <conflict type="erroneous gene model prediction">
        <sequence resource="EMBL-CDS" id="CAE76570"/>
    </conflict>
</comment>
<accession>Q8TG13</accession>
<accession>Q6MUT1</accession>
<accession>Q7RW11</accession>